<feature type="signal peptide" evidence="1">
    <location>
        <begin position="1"/>
        <end position="29"/>
    </location>
</feature>
<feature type="chain" id="PRO_0000299710" description="Putative uncharacterized protein YOR082C">
    <location>
        <begin position="30"/>
        <end position="113"/>
    </location>
</feature>
<feature type="transmembrane region" description="Helical" evidence="1">
    <location>
        <begin position="34"/>
        <end position="54"/>
    </location>
</feature>
<feature type="transmembrane region" description="Helical" evidence="1">
    <location>
        <begin position="56"/>
        <end position="76"/>
    </location>
</feature>
<proteinExistence type="uncertain"/>
<sequence>MLVVYMCIWVLYLLLFLFLFLFIASPASLRRSQTHILQCLYYFSLLLISGCAFFHQVLCLVLPLFCFVLFCFFYFFRSALEVFASLFPLPFSTRSHETISKSRIIIKAARGII</sequence>
<keyword id="KW-0472">Membrane</keyword>
<keyword id="KW-0732">Signal</keyword>
<keyword id="KW-0812">Transmembrane</keyword>
<keyword id="KW-1133">Transmembrane helix</keyword>
<accession>Q08498</accession>
<protein>
    <recommendedName>
        <fullName>Putative uncharacterized protein YOR082C</fullName>
    </recommendedName>
</protein>
<gene>
    <name type="ordered locus">YOR082C</name>
    <name type="ORF">O3113</name>
</gene>
<comment type="subcellular location">
    <subcellularLocation>
        <location evidence="2">Membrane</location>
        <topology evidence="2">Multi-pass membrane protein</topology>
    </subcellularLocation>
</comment>
<comment type="miscellaneous">
    <text evidence="2">Partially overlaps WHI5.</text>
</comment>
<comment type="caution">
    <text evidence="3">Product of a dubious gene prediction unlikely to encode a functional protein. Because of that it is not part of the S.cerevisiae S288c complete/reference proteome set.</text>
</comment>
<dbReference type="EMBL" id="AY693350">
    <property type="protein sequence ID" value="AAT93369.1"/>
    <property type="molecule type" value="Genomic_DNA"/>
</dbReference>
<dbReference type="EMBL" id="Z74990">
    <property type="protein sequence ID" value="CAA99276.1"/>
    <property type="molecule type" value="Genomic_DNA"/>
</dbReference>
<dbReference type="PIR" id="S66967">
    <property type="entry name" value="S66967"/>
</dbReference>
<dbReference type="SMR" id="Q08498"/>
<dbReference type="DIP" id="DIP-3831N"/>
<dbReference type="IntAct" id="Q08498">
    <property type="interactions" value="1"/>
</dbReference>
<dbReference type="STRING" id="4932.YOR082C"/>
<dbReference type="PaxDb" id="4932-YOR082C"/>
<dbReference type="EnsemblFungi" id="YOR082C_mRNA">
    <property type="protein sequence ID" value="YOR082C"/>
    <property type="gene ID" value="YOR082C"/>
</dbReference>
<dbReference type="AGR" id="SGD:S000005608"/>
<dbReference type="SGD" id="S000005608">
    <property type="gene designation" value="YOR082C"/>
</dbReference>
<dbReference type="HOGENOM" id="CLU_2135490_0_0_1"/>
<dbReference type="GO" id="GO:0016020">
    <property type="term" value="C:membrane"/>
    <property type="evidence" value="ECO:0007669"/>
    <property type="project" value="UniProtKB-SubCell"/>
</dbReference>
<reference key="1">
    <citation type="journal article" date="1997" name="Nature">
        <title>The nucleotide sequence of Saccharomyces cerevisiae chromosome XV.</title>
        <authorList>
            <person name="Dujon B."/>
            <person name="Albermann K."/>
            <person name="Aldea M."/>
            <person name="Alexandraki D."/>
            <person name="Ansorge W."/>
            <person name="Arino J."/>
            <person name="Benes V."/>
            <person name="Bohn C."/>
            <person name="Bolotin-Fukuhara M."/>
            <person name="Bordonne R."/>
            <person name="Boyer J."/>
            <person name="Camasses A."/>
            <person name="Casamayor A."/>
            <person name="Casas C."/>
            <person name="Cheret G."/>
            <person name="Cziepluch C."/>
            <person name="Daignan-Fornier B."/>
            <person name="Dang V.-D."/>
            <person name="de Haan M."/>
            <person name="Delius H."/>
            <person name="Durand P."/>
            <person name="Fairhead C."/>
            <person name="Feldmann H."/>
            <person name="Gaillon L."/>
            <person name="Galisson F."/>
            <person name="Gamo F.-J."/>
            <person name="Gancedo C."/>
            <person name="Goffeau A."/>
            <person name="Goulding S.E."/>
            <person name="Grivell L.A."/>
            <person name="Habbig B."/>
            <person name="Hand N.J."/>
            <person name="Hani J."/>
            <person name="Hattenhorst U."/>
            <person name="Hebling U."/>
            <person name="Hernando Y."/>
            <person name="Herrero E."/>
            <person name="Heumann K."/>
            <person name="Hiesel R."/>
            <person name="Hilger F."/>
            <person name="Hofmann B."/>
            <person name="Hollenberg C.P."/>
            <person name="Hughes B."/>
            <person name="Jauniaux J.-C."/>
            <person name="Kalogeropoulos A."/>
            <person name="Katsoulou C."/>
            <person name="Kordes E."/>
            <person name="Lafuente M.J."/>
            <person name="Landt O."/>
            <person name="Louis E.J."/>
            <person name="Maarse A.C."/>
            <person name="Madania A."/>
            <person name="Mannhaupt G."/>
            <person name="Marck C."/>
            <person name="Martin R.P."/>
            <person name="Mewes H.-W."/>
            <person name="Michaux G."/>
            <person name="Paces V."/>
            <person name="Parle-McDermott A.G."/>
            <person name="Pearson B.M."/>
            <person name="Perrin A."/>
            <person name="Pettersson B."/>
            <person name="Poch O."/>
            <person name="Pohl T.M."/>
            <person name="Poirey R."/>
            <person name="Portetelle D."/>
            <person name="Pujol A."/>
            <person name="Purnelle B."/>
            <person name="Ramezani Rad M."/>
            <person name="Rechmann S."/>
            <person name="Schwager C."/>
            <person name="Schweizer M."/>
            <person name="Sor F."/>
            <person name="Sterky F."/>
            <person name="Tarassov I.A."/>
            <person name="Teodoru C."/>
            <person name="Tettelin H."/>
            <person name="Thierry A."/>
            <person name="Tobiasch E."/>
            <person name="Tzermia M."/>
            <person name="Uhlen M."/>
            <person name="Unseld M."/>
            <person name="Valens M."/>
            <person name="Vandenbol M."/>
            <person name="Vetter I."/>
            <person name="Vlcek C."/>
            <person name="Voet M."/>
            <person name="Volckaert G."/>
            <person name="Voss H."/>
            <person name="Wambutt R."/>
            <person name="Wedler H."/>
            <person name="Wiemann S."/>
            <person name="Winsor B."/>
            <person name="Wolfe K.H."/>
            <person name="Zollner A."/>
            <person name="Zumstein E."/>
            <person name="Kleine K."/>
        </authorList>
    </citation>
    <scope>NUCLEOTIDE SEQUENCE [LARGE SCALE GENOMIC DNA]</scope>
    <source>
        <strain>ATCC 204508 / S288c</strain>
    </source>
</reference>
<reference key="2">
    <citation type="journal article" date="2014" name="G3 (Bethesda)">
        <title>The reference genome sequence of Saccharomyces cerevisiae: Then and now.</title>
        <authorList>
            <person name="Engel S.R."/>
            <person name="Dietrich F.S."/>
            <person name="Fisk D.G."/>
            <person name="Binkley G."/>
            <person name="Balakrishnan R."/>
            <person name="Costanzo M.C."/>
            <person name="Dwight S.S."/>
            <person name="Hitz B.C."/>
            <person name="Karra K."/>
            <person name="Nash R.S."/>
            <person name="Weng S."/>
            <person name="Wong E.D."/>
            <person name="Lloyd P."/>
            <person name="Skrzypek M.S."/>
            <person name="Miyasato S.R."/>
            <person name="Simison M."/>
            <person name="Cherry J.M."/>
        </authorList>
    </citation>
    <scope>GENOME REANNOTATION</scope>
    <source>
        <strain>ATCC 204508 / S288c</strain>
    </source>
</reference>
<reference key="3">
    <citation type="journal article" date="2007" name="Genome Res.">
        <title>Approaching a complete repository of sequence-verified protein-encoding clones for Saccharomyces cerevisiae.</title>
        <authorList>
            <person name="Hu Y."/>
            <person name="Rolfs A."/>
            <person name="Bhullar B."/>
            <person name="Murthy T.V.S."/>
            <person name="Zhu C."/>
            <person name="Berger M.F."/>
            <person name="Camargo A.A."/>
            <person name="Kelley F."/>
            <person name="McCarron S."/>
            <person name="Jepson D."/>
            <person name="Richardson A."/>
            <person name="Raphael J."/>
            <person name="Moreira D."/>
            <person name="Taycher E."/>
            <person name="Zuo D."/>
            <person name="Mohr S."/>
            <person name="Kane M.F."/>
            <person name="Williamson J."/>
            <person name="Simpson A.J.G."/>
            <person name="Bulyk M.L."/>
            <person name="Harlow E."/>
            <person name="Marsischky G."/>
            <person name="Kolodner R.D."/>
            <person name="LaBaer J."/>
        </authorList>
    </citation>
    <scope>NUCLEOTIDE SEQUENCE [GENOMIC DNA]</scope>
    <source>
        <strain>ATCC 204508 / S288c</strain>
    </source>
</reference>
<evidence type="ECO:0000255" key="1"/>
<evidence type="ECO:0000305" key="2"/>
<evidence type="ECO:0000305" key="3">
    <source>
    </source>
</evidence>
<organism>
    <name type="scientific">Saccharomyces cerevisiae (strain ATCC 204508 / S288c)</name>
    <name type="common">Baker's yeast</name>
    <dbReference type="NCBI Taxonomy" id="559292"/>
    <lineage>
        <taxon>Eukaryota</taxon>
        <taxon>Fungi</taxon>
        <taxon>Dikarya</taxon>
        <taxon>Ascomycota</taxon>
        <taxon>Saccharomycotina</taxon>
        <taxon>Saccharomycetes</taxon>
        <taxon>Saccharomycetales</taxon>
        <taxon>Saccharomycetaceae</taxon>
        <taxon>Saccharomyces</taxon>
    </lineage>
</organism>
<name>YO082_YEAST</name>